<organism>
    <name type="scientific">Danio rerio</name>
    <name type="common">Zebrafish</name>
    <name type="synonym">Brachydanio rerio</name>
    <dbReference type="NCBI Taxonomy" id="7955"/>
    <lineage>
        <taxon>Eukaryota</taxon>
        <taxon>Metazoa</taxon>
        <taxon>Chordata</taxon>
        <taxon>Craniata</taxon>
        <taxon>Vertebrata</taxon>
        <taxon>Euteleostomi</taxon>
        <taxon>Actinopterygii</taxon>
        <taxon>Neopterygii</taxon>
        <taxon>Teleostei</taxon>
        <taxon>Ostariophysi</taxon>
        <taxon>Cypriniformes</taxon>
        <taxon>Danionidae</taxon>
        <taxon>Danioninae</taxon>
        <taxon>Danio</taxon>
    </lineage>
</organism>
<proteinExistence type="evidence at transcript level"/>
<comment type="function">
    <text evidence="1 5">May function as a switch in neuronal development (By similarity). Acts as a negative regulator of transcription. Plays a role in dorsoventral patterning of the embryo.</text>
</comment>
<comment type="subcellular location">
    <subcellularLocation>
        <location evidence="2">Nucleus</location>
    </subcellularLocation>
</comment>
<comment type="tissue specificity">
    <text evidence="3 4">Expressed in all cells until gastrulation, becoming restricted to the developing central nervous system later, where expression is in the forebrain, midbrain and hindbrain but maximally at the midbrain-hindbrain boundary.</text>
</comment>
<comment type="developmental stage">
    <text evidence="4 5">Expressed both maternally and zygotically. Expressed in oocytes and throughout embryogenesis, whereas expression in adults is undetectable.</text>
</comment>
<comment type="disruption phenotype">
    <text evidence="5">Ventralized embryos.</text>
</comment>
<reference evidence="8 10" key="1">
    <citation type="journal article" date="1999" name="Dev. Genes Evol.">
        <title>sox30: a novel zebrafish sox gene expressed in a restricted manner at the midbrain-hindbrain boundary during neurogenesis.</title>
        <authorList>
            <person name="De Martino S.P."/>
            <person name="Errington F."/>
            <person name="Ashworth A."/>
            <person name="Jowett T."/>
            <person name="Austin C.A."/>
        </authorList>
    </citation>
    <scope>NUCLEOTIDE SEQUENCE [MRNA]</scope>
    <scope>TISSUE SPECIFICITY</scope>
</reference>
<reference evidence="8 9" key="2">
    <citation type="journal article" date="1999" name="Mech. Dev.">
        <title>Expression patterns of zebrafish sox11A, sox11B and sox21.</title>
        <authorList>
            <person name="Rimini R."/>
            <person name="Beltrame M."/>
            <person name="Argenton F."/>
            <person name="Szymczak D."/>
            <person name="Cotelli F."/>
            <person name="Bianchi M.E."/>
        </authorList>
    </citation>
    <scope>NUCLEOTIDE SEQUENCE [MRNA]</scope>
    <scope>TISSUE SPECIFICITY</scope>
    <scope>DEVELOPMENTAL STAGE</scope>
</reference>
<reference key="3">
    <citation type="journal article" date="2013" name="Nature">
        <title>The zebrafish reference genome sequence and its relationship to the human genome.</title>
        <authorList>
            <person name="Howe K."/>
            <person name="Clark M.D."/>
            <person name="Torroja C.F."/>
            <person name="Torrance J."/>
            <person name="Berthelot C."/>
            <person name="Muffato M."/>
            <person name="Collins J.E."/>
            <person name="Humphray S."/>
            <person name="McLaren K."/>
            <person name="Matthews L."/>
            <person name="McLaren S."/>
            <person name="Sealy I."/>
            <person name="Caccamo M."/>
            <person name="Churcher C."/>
            <person name="Scott C."/>
            <person name="Barrett J.C."/>
            <person name="Koch R."/>
            <person name="Rauch G.J."/>
            <person name="White S."/>
            <person name="Chow W."/>
            <person name="Kilian B."/>
            <person name="Quintais L.T."/>
            <person name="Guerra-Assuncao J.A."/>
            <person name="Zhou Y."/>
            <person name="Gu Y."/>
            <person name="Yen J."/>
            <person name="Vogel J.H."/>
            <person name="Eyre T."/>
            <person name="Redmond S."/>
            <person name="Banerjee R."/>
            <person name="Chi J."/>
            <person name="Fu B."/>
            <person name="Langley E."/>
            <person name="Maguire S.F."/>
            <person name="Laird G.K."/>
            <person name="Lloyd D."/>
            <person name="Kenyon E."/>
            <person name="Donaldson S."/>
            <person name="Sehra H."/>
            <person name="Almeida-King J."/>
            <person name="Loveland J."/>
            <person name="Trevanion S."/>
            <person name="Jones M."/>
            <person name="Quail M."/>
            <person name="Willey D."/>
            <person name="Hunt A."/>
            <person name="Burton J."/>
            <person name="Sims S."/>
            <person name="McLay K."/>
            <person name="Plumb B."/>
            <person name="Davis J."/>
            <person name="Clee C."/>
            <person name="Oliver K."/>
            <person name="Clark R."/>
            <person name="Riddle C."/>
            <person name="Elliot D."/>
            <person name="Threadgold G."/>
            <person name="Harden G."/>
            <person name="Ware D."/>
            <person name="Begum S."/>
            <person name="Mortimore B."/>
            <person name="Kerry G."/>
            <person name="Heath P."/>
            <person name="Phillimore B."/>
            <person name="Tracey A."/>
            <person name="Corby N."/>
            <person name="Dunn M."/>
            <person name="Johnson C."/>
            <person name="Wood J."/>
            <person name="Clark S."/>
            <person name="Pelan S."/>
            <person name="Griffiths G."/>
            <person name="Smith M."/>
            <person name="Glithero R."/>
            <person name="Howden P."/>
            <person name="Barker N."/>
            <person name="Lloyd C."/>
            <person name="Stevens C."/>
            <person name="Harley J."/>
            <person name="Holt K."/>
            <person name="Panagiotidis G."/>
            <person name="Lovell J."/>
            <person name="Beasley H."/>
            <person name="Henderson C."/>
            <person name="Gordon D."/>
            <person name="Auger K."/>
            <person name="Wright D."/>
            <person name="Collins J."/>
            <person name="Raisen C."/>
            <person name="Dyer L."/>
            <person name="Leung K."/>
            <person name="Robertson L."/>
            <person name="Ambridge K."/>
            <person name="Leongamornlert D."/>
            <person name="McGuire S."/>
            <person name="Gilderthorp R."/>
            <person name="Griffiths C."/>
            <person name="Manthravadi D."/>
            <person name="Nichol S."/>
            <person name="Barker G."/>
            <person name="Whitehead S."/>
            <person name="Kay M."/>
            <person name="Brown J."/>
            <person name="Murnane C."/>
            <person name="Gray E."/>
            <person name="Humphries M."/>
            <person name="Sycamore N."/>
            <person name="Barker D."/>
            <person name="Saunders D."/>
            <person name="Wallis J."/>
            <person name="Babbage A."/>
            <person name="Hammond S."/>
            <person name="Mashreghi-Mohammadi M."/>
            <person name="Barr L."/>
            <person name="Martin S."/>
            <person name="Wray P."/>
            <person name="Ellington A."/>
            <person name="Matthews N."/>
            <person name="Ellwood M."/>
            <person name="Woodmansey R."/>
            <person name="Clark G."/>
            <person name="Cooper J."/>
            <person name="Tromans A."/>
            <person name="Grafham D."/>
            <person name="Skuce C."/>
            <person name="Pandian R."/>
            <person name="Andrews R."/>
            <person name="Harrison E."/>
            <person name="Kimberley A."/>
            <person name="Garnett J."/>
            <person name="Fosker N."/>
            <person name="Hall R."/>
            <person name="Garner P."/>
            <person name="Kelly D."/>
            <person name="Bird C."/>
            <person name="Palmer S."/>
            <person name="Gehring I."/>
            <person name="Berger A."/>
            <person name="Dooley C.M."/>
            <person name="Ersan-Urun Z."/>
            <person name="Eser C."/>
            <person name="Geiger H."/>
            <person name="Geisler M."/>
            <person name="Karotki L."/>
            <person name="Kirn A."/>
            <person name="Konantz J."/>
            <person name="Konantz M."/>
            <person name="Oberlander M."/>
            <person name="Rudolph-Geiger S."/>
            <person name="Teucke M."/>
            <person name="Lanz C."/>
            <person name="Raddatz G."/>
            <person name="Osoegawa K."/>
            <person name="Zhu B."/>
            <person name="Rapp A."/>
            <person name="Widaa S."/>
            <person name="Langford C."/>
            <person name="Yang F."/>
            <person name="Schuster S.C."/>
            <person name="Carter N.P."/>
            <person name="Harrow J."/>
            <person name="Ning Z."/>
            <person name="Herrero J."/>
            <person name="Searle S.M."/>
            <person name="Enright A."/>
            <person name="Geisler R."/>
            <person name="Plasterk R.H."/>
            <person name="Lee C."/>
            <person name="Westerfield M."/>
            <person name="de Jong P.J."/>
            <person name="Zon L.I."/>
            <person name="Postlethwait J.H."/>
            <person name="Nusslein-Volhard C."/>
            <person name="Hubbard T.J."/>
            <person name="Roest Crollius H."/>
            <person name="Rogers J."/>
            <person name="Stemple D.L."/>
        </authorList>
    </citation>
    <scope>NUCLEOTIDE SEQUENCE [LARGE SCALE GENOMIC DNA]</scope>
    <source>
        <strain>Tuebingen</strain>
    </source>
</reference>
<reference evidence="12" key="4">
    <citation type="submission" date="2004-01" db="EMBL/GenBank/DDBJ databases">
        <authorList>
            <consortium name="NIH - Zebrafish Gene Collection (ZGC) project"/>
        </authorList>
    </citation>
    <scope>NUCLEOTIDE SEQUENCE [LARGE SCALE MRNA]</scope>
    <source>
        <tissue evidence="11">Embryo</tissue>
    </source>
</reference>
<reference evidence="8" key="5">
    <citation type="journal article" date="2004" name="Mech. Dev.">
        <title>Ectopic expression and knockdown of a zebrafish sox21 reveal its role as a transcriptional repressor in early development.</title>
        <authorList>
            <person name="Argenton F."/>
            <person name="Giudici S."/>
            <person name="Deflorian G."/>
            <person name="Cimbro S."/>
            <person name="Cotelli F."/>
            <person name="Beltrame M."/>
        </authorList>
    </citation>
    <scope>FUNCTION</scope>
    <scope>DEVELOPMENTAL STAGE</scope>
    <scope>DISRUPTION PHENOTYPE</scope>
</reference>
<reference evidence="8" key="6">
    <citation type="journal article" date="2000" name="Dev. Biol.">
        <title>Phylogeny of the SOX family of developmental transcription factors based on sequence and structural indicators.</title>
        <authorList>
            <person name="Bowles J."/>
            <person name="Schepers G."/>
            <person name="Koopman P."/>
        </authorList>
    </citation>
    <scope>NOMENCLATURE</scope>
</reference>
<accession>Q7SZS1</accession>
<accession>Q804S0</accession>
<accession>Q9PVF6</accession>
<accession>Q9YH21</accession>
<dbReference type="EMBL" id="AF101266">
    <property type="protein sequence ID" value="AAF08682.1"/>
    <property type="molecule type" value="mRNA"/>
</dbReference>
<dbReference type="EMBL" id="U85092">
    <property type="protein sequence ID" value="AAD00563.1"/>
    <property type="molecule type" value="mRNA"/>
</dbReference>
<dbReference type="EMBL" id="AL591389">
    <property type="protein sequence ID" value="CAD60660.1"/>
    <property type="molecule type" value="Genomic_DNA"/>
</dbReference>
<dbReference type="EMBL" id="BC056274">
    <property type="protein sequence ID" value="AAH56274.1"/>
    <property type="molecule type" value="mRNA"/>
</dbReference>
<dbReference type="EMBL" id="BC065639">
    <property type="protein sequence ID" value="AAH65639.1"/>
    <property type="molecule type" value="mRNA"/>
</dbReference>
<dbReference type="RefSeq" id="NP_571361.1">
    <property type="nucleotide sequence ID" value="NM_131286.1"/>
</dbReference>
<dbReference type="SMR" id="Q7SZS1"/>
<dbReference type="STRING" id="7955.ENSDARP00000049338"/>
<dbReference type="PaxDb" id="7955-ENSDARP00000049338"/>
<dbReference type="GeneID" id="30543"/>
<dbReference type="KEGG" id="dre:30543"/>
<dbReference type="AGR" id="ZFIN:ZDB-GENE-990715-6"/>
<dbReference type="CTD" id="30543"/>
<dbReference type="ZFIN" id="ZDB-GENE-990715-6">
    <property type="gene designation" value="sox21a"/>
</dbReference>
<dbReference type="eggNOG" id="KOG0527">
    <property type="taxonomic scope" value="Eukaryota"/>
</dbReference>
<dbReference type="InParanoid" id="Q7SZS1"/>
<dbReference type="OrthoDB" id="6247875at2759"/>
<dbReference type="PhylomeDB" id="Q7SZS1"/>
<dbReference type="TreeFam" id="TF351735"/>
<dbReference type="Reactome" id="R-DRE-3769402">
    <property type="pathway name" value="Deactivation of the beta-catenin transactivating complex"/>
</dbReference>
<dbReference type="PRO" id="PR:Q7SZS1"/>
<dbReference type="Proteomes" id="UP000000437">
    <property type="component" value="Alternate scaffold 6"/>
</dbReference>
<dbReference type="Proteomes" id="UP000000437">
    <property type="component" value="Chromosome 6"/>
</dbReference>
<dbReference type="GO" id="GO:0005634">
    <property type="term" value="C:nucleus"/>
    <property type="evidence" value="ECO:0000318"/>
    <property type="project" value="GO_Central"/>
</dbReference>
<dbReference type="GO" id="GO:0003677">
    <property type="term" value="F:DNA binding"/>
    <property type="evidence" value="ECO:0000315"/>
    <property type="project" value="ZFIN"/>
</dbReference>
<dbReference type="GO" id="GO:0001228">
    <property type="term" value="F:DNA-binding transcription activator activity, RNA polymerase II-specific"/>
    <property type="evidence" value="ECO:0000318"/>
    <property type="project" value="GO_Central"/>
</dbReference>
<dbReference type="GO" id="GO:0000981">
    <property type="term" value="F:DNA-binding transcription factor activity, RNA polymerase II-specific"/>
    <property type="evidence" value="ECO:0000315"/>
    <property type="project" value="ZFIN"/>
</dbReference>
<dbReference type="GO" id="GO:0000978">
    <property type="term" value="F:RNA polymerase II cis-regulatory region sequence-specific DNA binding"/>
    <property type="evidence" value="ECO:0000318"/>
    <property type="project" value="GO_Central"/>
</dbReference>
<dbReference type="GO" id="GO:0043565">
    <property type="term" value="F:sequence-specific DNA binding"/>
    <property type="evidence" value="ECO:0000250"/>
    <property type="project" value="UniProtKB"/>
</dbReference>
<dbReference type="GO" id="GO:0007420">
    <property type="term" value="P:brain development"/>
    <property type="evidence" value="ECO:0000318"/>
    <property type="project" value="GO_Central"/>
</dbReference>
<dbReference type="GO" id="GO:0009953">
    <property type="term" value="P:dorsal/ventral pattern formation"/>
    <property type="evidence" value="ECO:0000315"/>
    <property type="project" value="UniProtKB"/>
</dbReference>
<dbReference type="GO" id="GO:0045892">
    <property type="term" value="P:negative regulation of DNA-templated transcription"/>
    <property type="evidence" value="ECO:0000314"/>
    <property type="project" value="UniProtKB"/>
</dbReference>
<dbReference type="GO" id="GO:0000122">
    <property type="term" value="P:negative regulation of transcription by RNA polymerase II"/>
    <property type="evidence" value="ECO:0000314"/>
    <property type="project" value="UniProtKB"/>
</dbReference>
<dbReference type="GO" id="GO:0030182">
    <property type="term" value="P:neuron differentiation"/>
    <property type="evidence" value="ECO:0000318"/>
    <property type="project" value="GO_Central"/>
</dbReference>
<dbReference type="GO" id="GO:0045944">
    <property type="term" value="P:positive regulation of transcription by RNA polymerase II"/>
    <property type="evidence" value="ECO:0000318"/>
    <property type="project" value="GO_Central"/>
</dbReference>
<dbReference type="GO" id="GO:0048545">
    <property type="term" value="P:response to steroid hormone"/>
    <property type="evidence" value="ECO:0000270"/>
    <property type="project" value="ZFIN"/>
</dbReference>
<dbReference type="CDD" id="cd01388">
    <property type="entry name" value="HMG-box_SoxB"/>
    <property type="match status" value="1"/>
</dbReference>
<dbReference type="FunFam" id="1.10.30.10:FF:000002">
    <property type="entry name" value="transcription factor Sox-2"/>
    <property type="match status" value="1"/>
</dbReference>
<dbReference type="Gene3D" id="1.10.30.10">
    <property type="entry name" value="High mobility group box domain"/>
    <property type="match status" value="1"/>
</dbReference>
<dbReference type="InterPro" id="IPR009071">
    <property type="entry name" value="HMG_box_dom"/>
</dbReference>
<dbReference type="InterPro" id="IPR036910">
    <property type="entry name" value="HMG_box_dom_sf"/>
</dbReference>
<dbReference type="InterPro" id="IPR022097">
    <property type="entry name" value="SOX_fam"/>
</dbReference>
<dbReference type="InterPro" id="IPR050140">
    <property type="entry name" value="SRY-related_HMG-box_TF-like"/>
</dbReference>
<dbReference type="PANTHER" id="PTHR10270">
    <property type="entry name" value="SOX TRANSCRIPTION FACTOR"/>
    <property type="match status" value="1"/>
</dbReference>
<dbReference type="PANTHER" id="PTHR10270:SF313">
    <property type="entry name" value="TRANSCRIPTION FACTOR SOX-21"/>
    <property type="match status" value="1"/>
</dbReference>
<dbReference type="Pfam" id="PF00505">
    <property type="entry name" value="HMG_box"/>
    <property type="match status" value="1"/>
</dbReference>
<dbReference type="Pfam" id="PF12336">
    <property type="entry name" value="SOXp"/>
    <property type="match status" value="1"/>
</dbReference>
<dbReference type="SMART" id="SM00398">
    <property type="entry name" value="HMG"/>
    <property type="match status" value="1"/>
</dbReference>
<dbReference type="SUPFAM" id="SSF47095">
    <property type="entry name" value="HMG-box"/>
    <property type="match status" value="1"/>
</dbReference>
<dbReference type="PROSITE" id="PS50118">
    <property type="entry name" value="HMG_BOX_2"/>
    <property type="match status" value="1"/>
</dbReference>
<keyword id="KW-0217">Developmental protein</keyword>
<keyword id="KW-0238">DNA-binding</keyword>
<keyword id="KW-0539">Nucleus</keyword>
<keyword id="KW-1185">Reference proteome</keyword>
<keyword id="KW-0678">Repressor</keyword>
<keyword id="KW-0804">Transcription</keyword>
<keyword id="KW-0805">Transcription regulation</keyword>
<sequence>MAKPMDHVKRPMNAFMVWSRAQRRKMALDNPKMHNSEISKRLGGEWKLLSDSEKRPFIDEAKRLRAVHMKEHPDYKYRPRRKPKNLIKKDRYHFNVTYNLGEGDPLKSARLSGDALSDSLSAEKTSVAAAATRMFFSHHLSANPYPFLDLNSKISELPPAPFPHYSVLGYPSGLPAFPGMGVLAGAPHAHPSAGSPGHMLPYNCLGWPGSGPAVPSSYVLLPGMTKAQHEPYLAYAATI</sequence>
<protein>
    <recommendedName>
        <fullName evidence="7">Transcription factor Sox-21-A</fullName>
    </recommendedName>
    <alternativeName>
        <fullName evidence="11">SRY-box containing gene 21a</fullName>
    </alternativeName>
</protein>
<evidence type="ECO:0000250" key="1">
    <source>
        <dbReference type="UniProtKB" id="Q9W7R5"/>
    </source>
</evidence>
<evidence type="ECO:0000255" key="2">
    <source>
        <dbReference type="PROSITE-ProRule" id="PRU00267"/>
    </source>
</evidence>
<evidence type="ECO:0000269" key="3">
    <source>
    </source>
</evidence>
<evidence type="ECO:0000269" key="4">
    <source>
    </source>
</evidence>
<evidence type="ECO:0000269" key="5">
    <source>
    </source>
</evidence>
<evidence type="ECO:0000303" key="6">
    <source>
    </source>
</evidence>
<evidence type="ECO:0000303" key="7">
    <source>
    </source>
</evidence>
<evidence type="ECO:0000305" key="8"/>
<evidence type="ECO:0000312" key="9">
    <source>
        <dbReference type="EMBL" id="AAD00563.1"/>
    </source>
</evidence>
<evidence type="ECO:0000312" key="10">
    <source>
        <dbReference type="EMBL" id="AAF08682.1"/>
    </source>
</evidence>
<evidence type="ECO:0000312" key="11">
    <source>
        <dbReference type="EMBL" id="AAH56274.1"/>
    </source>
</evidence>
<evidence type="ECO:0000312" key="12">
    <source>
        <dbReference type="EMBL" id="CAD60660.1"/>
    </source>
</evidence>
<evidence type="ECO:0000312" key="13">
    <source>
        <dbReference type="ZFIN" id="ZDB-GENE-990715-6"/>
    </source>
</evidence>
<name>SX21A_DANRE</name>
<gene>
    <name evidence="13" type="primary">sox21a</name>
    <name evidence="9 13" type="synonym">sox21</name>
    <name evidence="6" type="synonym">sox30</name>
</gene>
<feature type="chain" id="PRO_0000378071" description="Transcription factor Sox-21-A">
    <location>
        <begin position="1"/>
        <end position="239"/>
    </location>
</feature>
<feature type="DNA-binding region" description="HMG box" evidence="2">
    <location>
        <begin position="8"/>
        <end position="76"/>
    </location>
</feature>
<feature type="sequence conflict" description="In Ref. 3; CAD60660." evidence="8" ref="3">
    <original>A</original>
    <variation>V</variation>
    <location>
        <position position="21"/>
    </location>
</feature>
<feature type="sequence conflict" description="In Ref. 1; AAF08682 and 3; CAD60660." evidence="8" ref="1 3">
    <original>M</original>
    <variation>V</variation>
    <location>
        <position position="134"/>
    </location>
</feature>
<feature type="sequence conflict" description="In Ref. 2; AAD00563." evidence="8" ref="2">
    <original>I</original>
    <variation>M</variation>
    <location>
        <position position="154"/>
    </location>
</feature>